<comment type="subunit">
    <text evidence="1">Part of the 50S ribosomal subunit. Contacts protein L32.</text>
</comment>
<comment type="similarity">
    <text evidence="1">Belongs to the bacterial ribosomal protein bL17 family.</text>
</comment>
<dbReference type="EMBL" id="CP000423">
    <property type="protein sequence ID" value="ABJ71212.1"/>
    <property type="molecule type" value="Genomic_DNA"/>
</dbReference>
<dbReference type="RefSeq" id="WP_003567509.1">
    <property type="nucleotide sequence ID" value="NC_008526.1"/>
</dbReference>
<dbReference type="RefSeq" id="YP_807654.1">
    <property type="nucleotide sequence ID" value="NC_008526.1"/>
</dbReference>
<dbReference type="SMR" id="Q035B0"/>
<dbReference type="STRING" id="321967.LSEI_2476"/>
<dbReference type="PaxDb" id="321967-LSEI_2476"/>
<dbReference type="GeneID" id="57091057"/>
<dbReference type="KEGG" id="lca:LSEI_2476"/>
<dbReference type="PATRIC" id="fig|321967.11.peg.2430"/>
<dbReference type="HOGENOM" id="CLU_074407_2_2_9"/>
<dbReference type="Proteomes" id="UP000001651">
    <property type="component" value="Chromosome"/>
</dbReference>
<dbReference type="GO" id="GO:0022625">
    <property type="term" value="C:cytosolic large ribosomal subunit"/>
    <property type="evidence" value="ECO:0007669"/>
    <property type="project" value="TreeGrafter"/>
</dbReference>
<dbReference type="GO" id="GO:0003735">
    <property type="term" value="F:structural constituent of ribosome"/>
    <property type="evidence" value="ECO:0007669"/>
    <property type="project" value="InterPro"/>
</dbReference>
<dbReference type="GO" id="GO:0006412">
    <property type="term" value="P:translation"/>
    <property type="evidence" value="ECO:0007669"/>
    <property type="project" value="UniProtKB-UniRule"/>
</dbReference>
<dbReference type="FunFam" id="3.90.1030.10:FF:000002">
    <property type="entry name" value="50S ribosomal protein L17"/>
    <property type="match status" value="1"/>
</dbReference>
<dbReference type="Gene3D" id="3.90.1030.10">
    <property type="entry name" value="Ribosomal protein L17"/>
    <property type="match status" value="1"/>
</dbReference>
<dbReference type="HAMAP" id="MF_01368">
    <property type="entry name" value="Ribosomal_bL17"/>
    <property type="match status" value="1"/>
</dbReference>
<dbReference type="InterPro" id="IPR000456">
    <property type="entry name" value="Ribosomal_bL17"/>
</dbReference>
<dbReference type="InterPro" id="IPR047859">
    <property type="entry name" value="Ribosomal_bL17_CS"/>
</dbReference>
<dbReference type="InterPro" id="IPR036373">
    <property type="entry name" value="Ribosomal_bL17_sf"/>
</dbReference>
<dbReference type="NCBIfam" id="TIGR00059">
    <property type="entry name" value="L17"/>
    <property type="match status" value="1"/>
</dbReference>
<dbReference type="PANTHER" id="PTHR14413:SF16">
    <property type="entry name" value="LARGE RIBOSOMAL SUBUNIT PROTEIN BL17M"/>
    <property type="match status" value="1"/>
</dbReference>
<dbReference type="PANTHER" id="PTHR14413">
    <property type="entry name" value="RIBOSOMAL PROTEIN L17"/>
    <property type="match status" value="1"/>
</dbReference>
<dbReference type="Pfam" id="PF01196">
    <property type="entry name" value="Ribosomal_L17"/>
    <property type="match status" value="1"/>
</dbReference>
<dbReference type="SUPFAM" id="SSF64263">
    <property type="entry name" value="Prokaryotic ribosomal protein L17"/>
    <property type="match status" value="1"/>
</dbReference>
<dbReference type="PROSITE" id="PS01167">
    <property type="entry name" value="RIBOSOMAL_L17"/>
    <property type="match status" value="1"/>
</dbReference>
<keyword id="KW-1185">Reference proteome</keyword>
<keyword id="KW-0687">Ribonucleoprotein</keyword>
<keyword id="KW-0689">Ribosomal protein</keyword>
<evidence type="ECO:0000255" key="1">
    <source>
        <dbReference type="HAMAP-Rule" id="MF_01368"/>
    </source>
</evidence>
<evidence type="ECO:0000305" key="2"/>
<gene>
    <name evidence="1" type="primary">rplQ</name>
    <name type="ordered locus">LSEI_2476</name>
</gene>
<proteinExistence type="inferred from homology"/>
<feature type="chain" id="PRO_1000055848" description="Large ribosomal subunit protein bL17">
    <location>
        <begin position="1"/>
        <end position="127"/>
    </location>
</feature>
<reference key="1">
    <citation type="journal article" date="2006" name="Proc. Natl. Acad. Sci. U.S.A.">
        <title>Comparative genomics of the lactic acid bacteria.</title>
        <authorList>
            <person name="Makarova K.S."/>
            <person name="Slesarev A."/>
            <person name="Wolf Y.I."/>
            <person name="Sorokin A."/>
            <person name="Mirkin B."/>
            <person name="Koonin E.V."/>
            <person name="Pavlov A."/>
            <person name="Pavlova N."/>
            <person name="Karamychev V."/>
            <person name="Polouchine N."/>
            <person name="Shakhova V."/>
            <person name="Grigoriev I."/>
            <person name="Lou Y."/>
            <person name="Rohksar D."/>
            <person name="Lucas S."/>
            <person name="Huang K."/>
            <person name="Goodstein D.M."/>
            <person name="Hawkins T."/>
            <person name="Plengvidhya V."/>
            <person name="Welker D."/>
            <person name="Hughes J."/>
            <person name="Goh Y."/>
            <person name="Benson A."/>
            <person name="Baldwin K."/>
            <person name="Lee J.-H."/>
            <person name="Diaz-Muniz I."/>
            <person name="Dosti B."/>
            <person name="Smeianov V."/>
            <person name="Wechter W."/>
            <person name="Barabote R."/>
            <person name="Lorca G."/>
            <person name="Altermann E."/>
            <person name="Barrangou R."/>
            <person name="Ganesan B."/>
            <person name="Xie Y."/>
            <person name="Rawsthorne H."/>
            <person name="Tamir D."/>
            <person name="Parker C."/>
            <person name="Breidt F."/>
            <person name="Broadbent J.R."/>
            <person name="Hutkins R."/>
            <person name="O'Sullivan D."/>
            <person name="Steele J."/>
            <person name="Unlu G."/>
            <person name="Saier M.H. Jr."/>
            <person name="Klaenhammer T."/>
            <person name="Richardson P."/>
            <person name="Kozyavkin S."/>
            <person name="Weimer B.C."/>
            <person name="Mills D.A."/>
        </authorList>
    </citation>
    <scope>NUCLEOTIDE SEQUENCE [LARGE SCALE GENOMIC DNA]</scope>
    <source>
        <strain>ATCC 334 / BCRC 17002 / CCUG 31169 / CIP 107868 / KCTC 3260 / NRRL B-441</strain>
    </source>
</reference>
<sequence>MSYRKLGRTSSQRKALLRDLTTDLLINERIVTTEARAKEVRSTAEKMITLGKRGDLHARRQAAAYVRNEIASVEEQDDNSVVVKSALQKLFSDLAPKYADRKGGYTRILKTAPRRGDGAPMVIIELV</sequence>
<organism>
    <name type="scientific">Lacticaseibacillus paracasei (strain ATCC 334 / BCRC 17002 / CCUG 31169 / CIP 107868 / KCTC 3260 / NRRL B-441)</name>
    <name type="common">Lactobacillus paracasei</name>
    <dbReference type="NCBI Taxonomy" id="321967"/>
    <lineage>
        <taxon>Bacteria</taxon>
        <taxon>Bacillati</taxon>
        <taxon>Bacillota</taxon>
        <taxon>Bacilli</taxon>
        <taxon>Lactobacillales</taxon>
        <taxon>Lactobacillaceae</taxon>
        <taxon>Lacticaseibacillus</taxon>
    </lineage>
</organism>
<name>RL17_LACP3</name>
<accession>Q035B0</accession>
<protein>
    <recommendedName>
        <fullName evidence="1">Large ribosomal subunit protein bL17</fullName>
    </recommendedName>
    <alternativeName>
        <fullName evidence="2">50S ribosomal protein L17</fullName>
    </alternativeName>
</protein>